<accession>A9VRT9</accession>
<name>FOSB_BACMK</name>
<evidence type="ECO:0000255" key="1">
    <source>
        <dbReference type="HAMAP-Rule" id="MF_01512"/>
    </source>
</evidence>
<evidence type="ECO:0000255" key="2">
    <source>
        <dbReference type="PROSITE-ProRule" id="PRU01163"/>
    </source>
</evidence>
<sequence>MLKGINHLCFSVSNLENSITFYEKVLEGELLVKGRKLAYFNICGVWIALNEETHIPRKEIHQSYTHLAFSVEQKDFERLLHRLEENNVHILQGRERDVRDCESIYFVDPDGHKFEFHSGTLQDRLNYYRDEKPHMTFY</sequence>
<organism>
    <name type="scientific">Bacillus mycoides (strain KBAB4)</name>
    <name type="common">Bacillus weihenstephanensis</name>
    <dbReference type="NCBI Taxonomy" id="315730"/>
    <lineage>
        <taxon>Bacteria</taxon>
        <taxon>Bacillati</taxon>
        <taxon>Bacillota</taxon>
        <taxon>Bacilli</taxon>
        <taxon>Bacillales</taxon>
        <taxon>Bacillaceae</taxon>
        <taxon>Bacillus</taxon>
        <taxon>Bacillus cereus group</taxon>
    </lineage>
</organism>
<reference key="1">
    <citation type="journal article" date="2008" name="Chem. Biol. Interact.">
        <title>Extending the Bacillus cereus group genomics to putative food-borne pathogens of different toxicity.</title>
        <authorList>
            <person name="Lapidus A."/>
            <person name="Goltsman E."/>
            <person name="Auger S."/>
            <person name="Galleron N."/>
            <person name="Segurens B."/>
            <person name="Dossat C."/>
            <person name="Land M.L."/>
            <person name="Broussolle V."/>
            <person name="Brillard J."/>
            <person name="Guinebretiere M.-H."/>
            <person name="Sanchis V."/>
            <person name="Nguen-the C."/>
            <person name="Lereclus D."/>
            <person name="Richardson P."/>
            <person name="Wincker P."/>
            <person name="Weissenbach J."/>
            <person name="Ehrlich S.D."/>
            <person name="Sorokin A."/>
        </authorList>
    </citation>
    <scope>NUCLEOTIDE SEQUENCE [LARGE SCALE GENOMIC DNA]</scope>
    <source>
        <strain>KBAB4</strain>
    </source>
</reference>
<dbReference type="EC" id="2.5.1.-" evidence="1"/>
<dbReference type="EMBL" id="CP000903">
    <property type="protein sequence ID" value="ABY43124.1"/>
    <property type="molecule type" value="Genomic_DNA"/>
</dbReference>
<dbReference type="RefSeq" id="WP_002165933.1">
    <property type="nucleotide sequence ID" value="NC_010184.1"/>
</dbReference>
<dbReference type="SMR" id="A9VRT9"/>
<dbReference type="KEGG" id="bwe:BcerKBAB4_1892"/>
<dbReference type="eggNOG" id="COG0346">
    <property type="taxonomic scope" value="Bacteria"/>
</dbReference>
<dbReference type="HOGENOM" id="CLU_121356_0_0_9"/>
<dbReference type="Proteomes" id="UP000002154">
    <property type="component" value="Chromosome"/>
</dbReference>
<dbReference type="GO" id="GO:0005737">
    <property type="term" value="C:cytoplasm"/>
    <property type="evidence" value="ECO:0007669"/>
    <property type="project" value="UniProtKB-SubCell"/>
</dbReference>
<dbReference type="GO" id="GO:0000287">
    <property type="term" value="F:magnesium ion binding"/>
    <property type="evidence" value="ECO:0007669"/>
    <property type="project" value="UniProtKB-UniRule"/>
</dbReference>
<dbReference type="GO" id="GO:0016765">
    <property type="term" value="F:transferase activity, transferring alkyl or aryl (other than methyl) groups"/>
    <property type="evidence" value="ECO:0007669"/>
    <property type="project" value="UniProtKB-UniRule"/>
</dbReference>
<dbReference type="GO" id="GO:0046677">
    <property type="term" value="P:response to antibiotic"/>
    <property type="evidence" value="ECO:0007669"/>
    <property type="project" value="UniProtKB-UniRule"/>
</dbReference>
<dbReference type="FunFam" id="3.10.180.10:FF:000015">
    <property type="entry name" value="Metallothiol transferase FosB"/>
    <property type="match status" value="1"/>
</dbReference>
<dbReference type="Gene3D" id="3.10.180.10">
    <property type="entry name" value="2,3-Dihydroxybiphenyl 1,2-Dioxygenase, domain 1"/>
    <property type="match status" value="1"/>
</dbReference>
<dbReference type="HAMAP" id="MF_01512">
    <property type="entry name" value="FosB"/>
    <property type="match status" value="1"/>
</dbReference>
<dbReference type="InterPro" id="IPR051332">
    <property type="entry name" value="Fosfomycin_Res_Enzymes"/>
</dbReference>
<dbReference type="InterPro" id="IPR029068">
    <property type="entry name" value="Glyas_Bleomycin-R_OHBP_Dase"/>
</dbReference>
<dbReference type="InterPro" id="IPR004360">
    <property type="entry name" value="Glyas_Fos-R_dOase_dom"/>
</dbReference>
<dbReference type="InterPro" id="IPR022858">
    <property type="entry name" value="Metallothiol_Trafse_FosB"/>
</dbReference>
<dbReference type="InterPro" id="IPR037523">
    <property type="entry name" value="VOC"/>
</dbReference>
<dbReference type="NCBIfam" id="NF000493">
    <property type="entry name" value="Fos_BSH"/>
    <property type="match status" value="1"/>
</dbReference>
<dbReference type="NCBIfam" id="NF041541">
    <property type="entry name" value="fosBx1_fam"/>
    <property type="match status" value="1"/>
</dbReference>
<dbReference type="NCBIfam" id="NF003152">
    <property type="entry name" value="PRK04101.1"/>
    <property type="match status" value="1"/>
</dbReference>
<dbReference type="PANTHER" id="PTHR36113:SF6">
    <property type="entry name" value="FOSFOMYCIN RESISTANCE PROTEIN FOSX"/>
    <property type="match status" value="1"/>
</dbReference>
<dbReference type="PANTHER" id="PTHR36113">
    <property type="entry name" value="LYASE, PUTATIVE-RELATED-RELATED"/>
    <property type="match status" value="1"/>
</dbReference>
<dbReference type="Pfam" id="PF00903">
    <property type="entry name" value="Glyoxalase"/>
    <property type="match status" value="1"/>
</dbReference>
<dbReference type="SUPFAM" id="SSF54593">
    <property type="entry name" value="Glyoxalase/Bleomycin resistance protein/Dihydroxybiphenyl dioxygenase"/>
    <property type="match status" value="1"/>
</dbReference>
<dbReference type="PROSITE" id="PS51819">
    <property type="entry name" value="VOC"/>
    <property type="match status" value="1"/>
</dbReference>
<feature type="chain" id="PRO_1000146149" description="Metallothiol transferase FosB">
    <location>
        <begin position="1"/>
        <end position="138"/>
    </location>
</feature>
<feature type="domain" description="VOC" evidence="2">
    <location>
        <begin position="4"/>
        <end position="119"/>
    </location>
</feature>
<feature type="active site" description="Proton donor/acceptor" evidence="2">
    <location>
        <position position="115"/>
    </location>
</feature>
<feature type="binding site" evidence="1">
    <location>
        <position position="7"/>
    </location>
    <ligand>
        <name>Mg(2+)</name>
        <dbReference type="ChEBI" id="CHEBI:18420"/>
    </ligand>
</feature>
<feature type="binding site" evidence="1">
    <location>
        <position position="66"/>
    </location>
    <ligand>
        <name>Mg(2+)</name>
        <dbReference type="ChEBI" id="CHEBI:18420"/>
    </ligand>
</feature>
<feature type="binding site" evidence="1">
    <location>
        <position position="115"/>
    </location>
    <ligand>
        <name>Mg(2+)</name>
        <dbReference type="ChEBI" id="CHEBI:18420"/>
    </ligand>
</feature>
<comment type="function">
    <text evidence="1">Metallothiol transferase which confers resistance to fosfomycin by catalyzing the addition of a thiol cofactor to fosfomycin. L-cysteine is probably the physiological thiol donor.</text>
</comment>
<comment type="cofactor">
    <cofactor evidence="1">
        <name>Mg(2+)</name>
        <dbReference type="ChEBI" id="CHEBI:18420"/>
    </cofactor>
</comment>
<comment type="subunit">
    <text evidence="1">Homodimer.</text>
</comment>
<comment type="subcellular location">
    <subcellularLocation>
        <location evidence="1">Cytoplasm</location>
    </subcellularLocation>
</comment>
<comment type="similarity">
    <text evidence="1">Belongs to the fosfomycin resistance protein family. FosB subfamily.</text>
</comment>
<gene>
    <name evidence="1" type="primary">fosB</name>
    <name type="ordered locus">BcerKBAB4_1892</name>
</gene>
<keyword id="KW-0046">Antibiotic resistance</keyword>
<keyword id="KW-0963">Cytoplasm</keyword>
<keyword id="KW-0460">Magnesium</keyword>
<keyword id="KW-0479">Metal-binding</keyword>
<keyword id="KW-0808">Transferase</keyword>
<proteinExistence type="inferred from homology"/>
<protein>
    <recommendedName>
        <fullName evidence="1">Metallothiol transferase FosB</fullName>
        <ecNumber evidence="1">2.5.1.-</ecNumber>
    </recommendedName>
    <alternativeName>
        <fullName evidence="1">Fosfomycin resistance protein</fullName>
    </alternativeName>
</protein>